<feature type="chain" id="PRO_0000093614" description="Cobrotoxin II" evidence="3">
    <location>
        <begin position="1"/>
        <end position="62"/>
    </location>
</feature>
<feature type="region of interest" description="Disordered" evidence="2">
    <location>
        <begin position="1"/>
        <end position="23"/>
    </location>
</feature>
<feature type="compositionally biased region" description="Polar residues" evidence="2">
    <location>
        <begin position="1"/>
        <end position="16"/>
    </location>
</feature>
<feature type="disulfide bond" evidence="3 5">
    <location>
        <begin position="3"/>
        <end position="24"/>
    </location>
</feature>
<feature type="disulfide bond" evidence="3 5">
    <location>
        <begin position="17"/>
        <end position="41"/>
    </location>
</feature>
<feature type="disulfide bond" evidence="3 5">
    <location>
        <begin position="43"/>
        <end position="54"/>
    </location>
</feature>
<feature type="disulfide bond" evidence="3 5">
    <location>
        <begin position="55"/>
        <end position="60"/>
    </location>
</feature>
<feature type="strand" evidence="6">
    <location>
        <begin position="2"/>
        <end position="4"/>
    </location>
</feature>
<feature type="strand" evidence="6">
    <location>
        <begin position="14"/>
        <end position="16"/>
    </location>
</feature>
<feature type="strand" evidence="6">
    <location>
        <begin position="24"/>
        <end position="30"/>
    </location>
</feature>
<feature type="strand" evidence="6">
    <location>
        <begin position="35"/>
        <end position="39"/>
    </location>
</feature>
<feature type="strand" evidence="6">
    <location>
        <begin position="49"/>
        <end position="51"/>
    </location>
</feature>
<organism>
    <name type="scientific">Naja kaouthia</name>
    <name type="common">Monocled cobra</name>
    <name type="synonym">Naja siamensis</name>
    <dbReference type="NCBI Taxonomy" id="8649"/>
    <lineage>
        <taxon>Eukaryota</taxon>
        <taxon>Metazoa</taxon>
        <taxon>Chordata</taxon>
        <taxon>Craniata</taxon>
        <taxon>Vertebrata</taxon>
        <taxon>Euteleostomi</taxon>
        <taxon>Lepidosauria</taxon>
        <taxon>Squamata</taxon>
        <taxon>Bifurcata</taxon>
        <taxon>Unidentata</taxon>
        <taxon>Episquamata</taxon>
        <taxon>Toxicofera</taxon>
        <taxon>Serpentes</taxon>
        <taxon>Colubroidea</taxon>
        <taxon>Elapidae</taxon>
        <taxon>Elapinae</taxon>
        <taxon>Naja</taxon>
    </lineage>
</organism>
<keyword id="KW-0002">3D-structure</keyword>
<keyword id="KW-0008">Acetylcholine receptor inhibiting toxin</keyword>
<keyword id="KW-0903">Direct protein sequencing</keyword>
<keyword id="KW-1015">Disulfide bond</keyword>
<keyword id="KW-0872">Ion channel impairing toxin</keyword>
<keyword id="KW-0528">Neurotoxin</keyword>
<keyword id="KW-0629">Postsynaptic neurotoxin</keyword>
<keyword id="KW-0964">Secreted</keyword>
<keyword id="KW-0800">Toxin</keyword>
<protein>
    <recommendedName>
        <fullName>Cobrotoxin II</fullName>
        <shortName>CBT II</shortName>
    </recommendedName>
    <alternativeName>
        <fullName>CBT2</fullName>
    </alternativeName>
    <alternativeName>
        <fullName>Short neurotoxin 1</fullName>
    </alternativeName>
    <alternativeName>
        <fullName>Short neurotoxin 5</fullName>
    </alternativeName>
</protein>
<reference key="1">
    <citation type="submission" date="2000-11" db="UniProtKB">
        <authorList>
            <person name="Cheng Y."/>
            <person name="Wang W."/>
            <person name="Wang J."/>
        </authorList>
    </citation>
    <scope>PROTEIN SEQUENCE</scope>
    <scope>STRUCTURE BY NMR</scope>
    <scope>DISULFIDE BONDS</scope>
    <scope>SUBCELLULAR LOCATION</scope>
    <source>
        <tissue>Venom</tissue>
    </source>
</reference>
<dbReference type="PDB" id="1G6M">
    <property type="method" value="NMR"/>
    <property type="chains" value="A=1-62"/>
</dbReference>
<dbReference type="PDBsum" id="1G6M"/>
<dbReference type="SMR" id="P82849"/>
<dbReference type="EvolutionaryTrace" id="P82849"/>
<dbReference type="GO" id="GO:0005576">
    <property type="term" value="C:extracellular region"/>
    <property type="evidence" value="ECO:0007669"/>
    <property type="project" value="UniProtKB-SubCell"/>
</dbReference>
<dbReference type="GO" id="GO:0030550">
    <property type="term" value="F:acetylcholine receptor inhibitor activity"/>
    <property type="evidence" value="ECO:0007669"/>
    <property type="project" value="UniProtKB-KW"/>
</dbReference>
<dbReference type="GO" id="GO:0099106">
    <property type="term" value="F:ion channel regulator activity"/>
    <property type="evidence" value="ECO:0007669"/>
    <property type="project" value="UniProtKB-KW"/>
</dbReference>
<dbReference type="GO" id="GO:0090729">
    <property type="term" value="F:toxin activity"/>
    <property type="evidence" value="ECO:0007669"/>
    <property type="project" value="UniProtKB-KW"/>
</dbReference>
<dbReference type="CDD" id="cd00206">
    <property type="entry name" value="TFP_snake_toxin"/>
    <property type="match status" value="1"/>
</dbReference>
<dbReference type="FunFam" id="2.10.60.10:FF:000024">
    <property type="entry name" value="Cytotoxin 1"/>
    <property type="match status" value="1"/>
</dbReference>
<dbReference type="Gene3D" id="2.10.60.10">
    <property type="entry name" value="CD59"/>
    <property type="match status" value="1"/>
</dbReference>
<dbReference type="InterPro" id="IPR003571">
    <property type="entry name" value="Snake_3FTx"/>
</dbReference>
<dbReference type="InterPro" id="IPR045860">
    <property type="entry name" value="Snake_toxin-like_sf"/>
</dbReference>
<dbReference type="InterPro" id="IPR018354">
    <property type="entry name" value="Snake_toxin_con_site"/>
</dbReference>
<dbReference type="InterPro" id="IPR054131">
    <property type="entry name" value="Toxin_cobra-type"/>
</dbReference>
<dbReference type="Pfam" id="PF21947">
    <property type="entry name" value="Toxin_cobra-type"/>
    <property type="match status" value="1"/>
</dbReference>
<dbReference type="SUPFAM" id="SSF57302">
    <property type="entry name" value="Snake toxin-like"/>
    <property type="match status" value="1"/>
</dbReference>
<dbReference type="PROSITE" id="PS00272">
    <property type="entry name" value="SNAKE_TOXIN"/>
    <property type="match status" value="1"/>
</dbReference>
<proteinExistence type="evidence at protein level"/>
<evidence type="ECO:0000250" key="1">
    <source>
        <dbReference type="UniProtKB" id="P60775"/>
    </source>
</evidence>
<evidence type="ECO:0000256" key="2">
    <source>
        <dbReference type="SAM" id="MobiDB-lite"/>
    </source>
</evidence>
<evidence type="ECO:0000269" key="3">
    <source ref="1"/>
</evidence>
<evidence type="ECO:0000305" key="4"/>
<evidence type="ECO:0000312" key="5">
    <source>
        <dbReference type="PDB" id="1G6M"/>
    </source>
</evidence>
<evidence type="ECO:0007829" key="6">
    <source>
        <dbReference type="PDB" id="1G6M"/>
    </source>
</evidence>
<sequence>LECHNQQSSQTPTTTGCSGGENNCYKKEWRDNRGYRTERGCGCPSVKKGIGINCCTTDRCNN</sequence>
<comment type="function">
    <text evidence="1">Binds to muscle nicotinic acetylcholine receptor (nAChR) and inhibit acetylcholine from binding to the receptor, thereby impairing neuromuscular transmission.</text>
</comment>
<comment type="subcellular location">
    <subcellularLocation>
        <location evidence="3">Secreted</location>
    </subcellularLocation>
</comment>
<comment type="tissue specificity">
    <text evidence="4">Expressed by the venom gland.</text>
</comment>
<comment type="similarity">
    <text evidence="4">Belongs to the three-finger toxin family. Short-chain subfamily. Type I alpha-neurotoxin sub-subfamily.</text>
</comment>
<accession>P82849</accession>
<name>3S1B2_NAJKA</name>